<name>SYR_HYPNA</name>
<dbReference type="EC" id="6.1.1.19" evidence="1"/>
<dbReference type="EMBL" id="CP000158">
    <property type="protein sequence ID" value="ABI76291.1"/>
    <property type="molecule type" value="Genomic_DNA"/>
</dbReference>
<dbReference type="RefSeq" id="WP_011647692.1">
    <property type="nucleotide sequence ID" value="NC_008358.1"/>
</dbReference>
<dbReference type="SMR" id="Q0BYP8"/>
<dbReference type="STRING" id="228405.HNE_2715"/>
<dbReference type="KEGG" id="hne:HNE_2715"/>
<dbReference type="eggNOG" id="COG0018">
    <property type="taxonomic scope" value="Bacteria"/>
</dbReference>
<dbReference type="HOGENOM" id="CLU_006406_5_1_5"/>
<dbReference type="Proteomes" id="UP000001959">
    <property type="component" value="Chromosome"/>
</dbReference>
<dbReference type="GO" id="GO:0005737">
    <property type="term" value="C:cytoplasm"/>
    <property type="evidence" value="ECO:0007669"/>
    <property type="project" value="UniProtKB-SubCell"/>
</dbReference>
<dbReference type="GO" id="GO:0004814">
    <property type="term" value="F:arginine-tRNA ligase activity"/>
    <property type="evidence" value="ECO:0007669"/>
    <property type="project" value="UniProtKB-UniRule"/>
</dbReference>
<dbReference type="GO" id="GO:0005524">
    <property type="term" value="F:ATP binding"/>
    <property type="evidence" value="ECO:0007669"/>
    <property type="project" value="UniProtKB-UniRule"/>
</dbReference>
<dbReference type="GO" id="GO:0006420">
    <property type="term" value="P:arginyl-tRNA aminoacylation"/>
    <property type="evidence" value="ECO:0007669"/>
    <property type="project" value="UniProtKB-UniRule"/>
</dbReference>
<dbReference type="CDD" id="cd07956">
    <property type="entry name" value="Anticodon_Ia_Arg"/>
    <property type="match status" value="1"/>
</dbReference>
<dbReference type="CDD" id="cd00671">
    <property type="entry name" value="ArgRS_core"/>
    <property type="match status" value="1"/>
</dbReference>
<dbReference type="Gene3D" id="3.30.1360.70">
    <property type="entry name" value="Arginyl tRNA synthetase N-terminal domain"/>
    <property type="match status" value="1"/>
</dbReference>
<dbReference type="Gene3D" id="3.40.50.620">
    <property type="entry name" value="HUPs"/>
    <property type="match status" value="1"/>
</dbReference>
<dbReference type="Gene3D" id="1.10.730.10">
    <property type="entry name" value="Isoleucyl-tRNA Synthetase, Domain 1"/>
    <property type="match status" value="1"/>
</dbReference>
<dbReference type="HAMAP" id="MF_00123">
    <property type="entry name" value="Arg_tRNA_synth"/>
    <property type="match status" value="1"/>
</dbReference>
<dbReference type="InterPro" id="IPR001278">
    <property type="entry name" value="Arg-tRNA-ligase"/>
</dbReference>
<dbReference type="InterPro" id="IPR005148">
    <property type="entry name" value="Arg-tRNA-synth_N"/>
</dbReference>
<dbReference type="InterPro" id="IPR036695">
    <property type="entry name" value="Arg-tRNA-synth_N_sf"/>
</dbReference>
<dbReference type="InterPro" id="IPR035684">
    <property type="entry name" value="ArgRS_core"/>
</dbReference>
<dbReference type="InterPro" id="IPR008909">
    <property type="entry name" value="DALR_anticod-bd"/>
</dbReference>
<dbReference type="InterPro" id="IPR014729">
    <property type="entry name" value="Rossmann-like_a/b/a_fold"/>
</dbReference>
<dbReference type="InterPro" id="IPR009080">
    <property type="entry name" value="tRNAsynth_Ia_anticodon-bd"/>
</dbReference>
<dbReference type="NCBIfam" id="TIGR00456">
    <property type="entry name" value="argS"/>
    <property type="match status" value="1"/>
</dbReference>
<dbReference type="PANTHER" id="PTHR11956:SF5">
    <property type="entry name" value="ARGININE--TRNA LIGASE, CYTOPLASMIC"/>
    <property type="match status" value="1"/>
</dbReference>
<dbReference type="PANTHER" id="PTHR11956">
    <property type="entry name" value="ARGINYL-TRNA SYNTHETASE"/>
    <property type="match status" value="1"/>
</dbReference>
<dbReference type="Pfam" id="PF03485">
    <property type="entry name" value="Arg_tRNA_synt_N"/>
    <property type="match status" value="1"/>
</dbReference>
<dbReference type="Pfam" id="PF05746">
    <property type="entry name" value="DALR_1"/>
    <property type="match status" value="1"/>
</dbReference>
<dbReference type="Pfam" id="PF00750">
    <property type="entry name" value="tRNA-synt_1d"/>
    <property type="match status" value="1"/>
</dbReference>
<dbReference type="PRINTS" id="PR01038">
    <property type="entry name" value="TRNASYNTHARG"/>
</dbReference>
<dbReference type="SMART" id="SM01016">
    <property type="entry name" value="Arg_tRNA_synt_N"/>
    <property type="match status" value="1"/>
</dbReference>
<dbReference type="SMART" id="SM00836">
    <property type="entry name" value="DALR_1"/>
    <property type="match status" value="1"/>
</dbReference>
<dbReference type="SUPFAM" id="SSF47323">
    <property type="entry name" value="Anticodon-binding domain of a subclass of class I aminoacyl-tRNA synthetases"/>
    <property type="match status" value="1"/>
</dbReference>
<dbReference type="SUPFAM" id="SSF55190">
    <property type="entry name" value="Arginyl-tRNA synthetase (ArgRS), N-terminal 'additional' domain"/>
    <property type="match status" value="1"/>
</dbReference>
<dbReference type="SUPFAM" id="SSF52374">
    <property type="entry name" value="Nucleotidylyl transferase"/>
    <property type="match status" value="1"/>
</dbReference>
<evidence type="ECO:0000255" key="1">
    <source>
        <dbReference type="HAMAP-Rule" id="MF_00123"/>
    </source>
</evidence>
<proteinExistence type="inferred from homology"/>
<feature type="chain" id="PRO_1000018043" description="Arginine--tRNA ligase">
    <location>
        <begin position="1"/>
        <end position="589"/>
    </location>
</feature>
<feature type="short sequence motif" description="'HIGH' region">
    <location>
        <begin position="123"/>
        <end position="133"/>
    </location>
</feature>
<keyword id="KW-0030">Aminoacyl-tRNA synthetase</keyword>
<keyword id="KW-0067">ATP-binding</keyword>
<keyword id="KW-0963">Cytoplasm</keyword>
<keyword id="KW-0436">Ligase</keyword>
<keyword id="KW-0547">Nucleotide-binding</keyword>
<keyword id="KW-0648">Protein biosynthesis</keyword>
<keyword id="KW-1185">Reference proteome</keyword>
<protein>
    <recommendedName>
        <fullName evidence="1">Arginine--tRNA ligase</fullName>
        <ecNumber evidence="1">6.1.1.19</ecNumber>
    </recommendedName>
    <alternativeName>
        <fullName evidence="1">Arginyl-tRNA synthetase</fullName>
        <shortName evidence="1">ArgRS</shortName>
    </alternativeName>
</protein>
<reference key="1">
    <citation type="journal article" date="2006" name="J. Bacteriol.">
        <title>Comparative genomic evidence for a close relationship between the dimorphic prosthecate bacteria Hyphomonas neptunium and Caulobacter crescentus.</title>
        <authorList>
            <person name="Badger J.H."/>
            <person name="Hoover T.R."/>
            <person name="Brun Y.V."/>
            <person name="Weiner R.M."/>
            <person name="Laub M.T."/>
            <person name="Alexandre G."/>
            <person name="Mrazek J."/>
            <person name="Ren Q."/>
            <person name="Paulsen I.T."/>
            <person name="Nelson K.E."/>
            <person name="Khouri H.M."/>
            <person name="Radune D."/>
            <person name="Sosa J."/>
            <person name="Dodson R.J."/>
            <person name="Sullivan S.A."/>
            <person name="Rosovitz M.J."/>
            <person name="Madupu R."/>
            <person name="Brinkac L.M."/>
            <person name="Durkin A.S."/>
            <person name="Daugherty S.C."/>
            <person name="Kothari S.P."/>
            <person name="Giglio M.G."/>
            <person name="Zhou L."/>
            <person name="Haft D.H."/>
            <person name="Selengut J.D."/>
            <person name="Davidsen T.M."/>
            <person name="Yang Q."/>
            <person name="Zafar N."/>
            <person name="Ward N.L."/>
        </authorList>
    </citation>
    <scope>NUCLEOTIDE SEQUENCE [LARGE SCALE GENOMIC DNA]</scope>
    <source>
        <strain>ATCC 15444</strain>
    </source>
</reference>
<sequence>MTSLAKNLSAAAGAAFEAMGLEARFGEVRRSDKPELADFQCNGAMAAAKAAGKNPREIAGEIAARLKEHASVLSAEVAGPGFINLRVSDAALSARAEHVRGDAMAGAEKAADAAVTVIDFGGANVAKPMHVGHLRSAVIGDTLQRICRFAGDEVTSDVHLGDWGLQMGHLVTELYDEQPGLIYFDAAYTGPYPAEPPVTIDDLGRLYPQASNKAKADAARNERSQKAVAEMQAGRPGYRALLRHFIEVSIEALKLDYGFLNVSFDLWKGESDVDGLIPGLVERFKQAGLAEESDGALIVHVARETDKKEMPPVMLVNSRGGTGYHTTDLATILDRMDTLTTTPERMLYVVDQRQALHFEQVFRAAGMLGLIAEDKLEHIGFGTVNGADGKPFKTREGGVLRLADLQAMAMEEAEKKLSAANLPADMGDAERFDVAKKVAVAALRFSDLMNTRTTNYVFDLERFTSFEGKTGPYLMYAAVRVKSVLRKAAENGHSAGKVVVTEDAERTLVLQLDGFGAALLGAREKRMPHILCEHLYGLAQAFSSFYAALPIAAEADGEKRASRLALADGVRHQLETGLELLGIAVPERM</sequence>
<comment type="catalytic activity">
    <reaction evidence="1">
        <text>tRNA(Arg) + L-arginine + ATP = L-arginyl-tRNA(Arg) + AMP + diphosphate</text>
        <dbReference type="Rhea" id="RHEA:20301"/>
        <dbReference type="Rhea" id="RHEA-COMP:9658"/>
        <dbReference type="Rhea" id="RHEA-COMP:9673"/>
        <dbReference type="ChEBI" id="CHEBI:30616"/>
        <dbReference type="ChEBI" id="CHEBI:32682"/>
        <dbReference type="ChEBI" id="CHEBI:33019"/>
        <dbReference type="ChEBI" id="CHEBI:78442"/>
        <dbReference type="ChEBI" id="CHEBI:78513"/>
        <dbReference type="ChEBI" id="CHEBI:456215"/>
        <dbReference type="EC" id="6.1.1.19"/>
    </reaction>
</comment>
<comment type="subunit">
    <text evidence="1">Monomer.</text>
</comment>
<comment type="subcellular location">
    <subcellularLocation>
        <location evidence="1">Cytoplasm</location>
    </subcellularLocation>
</comment>
<comment type="similarity">
    <text evidence="1">Belongs to the class-I aminoacyl-tRNA synthetase family.</text>
</comment>
<gene>
    <name evidence="1" type="primary">argS</name>
    <name type="ordered locus">HNE_2715</name>
</gene>
<accession>Q0BYP8</accession>
<organism>
    <name type="scientific">Hyphomonas neptunium (strain ATCC 15444)</name>
    <dbReference type="NCBI Taxonomy" id="228405"/>
    <lineage>
        <taxon>Bacteria</taxon>
        <taxon>Pseudomonadati</taxon>
        <taxon>Pseudomonadota</taxon>
        <taxon>Alphaproteobacteria</taxon>
        <taxon>Hyphomonadales</taxon>
        <taxon>Hyphomonadaceae</taxon>
        <taxon>Hyphomonas</taxon>
    </lineage>
</organism>